<evidence type="ECO:0000255" key="1">
    <source>
        <dbReference type="HAMAP-Rule" id="MF_01810"/>
    </source>
</evidence>
<name>YIDC_BURCH</name>
<sequence>MDIKRTVLWVIFFMSAVMLYDNWQRDHGRPSMFFPSATHTAPAAAGGASGTSATTAGDVPAAAAGAAPSTTAPAAQAQLVKFSTDVYDGEIDTRGGTLAKLTLKKQGDGKQPDLYITLFDHTAGHTYLARTGLLGGDFPNHNDVYTQLNPGSTSLTGDENTLKLSFESPVKGGVKVVKTYTFTRGSYVIGVDTKIDNVGTAPVTPTVYMELVRDNTAVETPMFSHTFLGPAVYTDAKHFQKIDFSDLDKNKANFEKSSDNGWVAMVQHYFASAWIPQQGAKRDIYAEKIDPTLYRVGVKQPVAAIAPGQSADVQARLFAGPEEERMLEGIAPGLELVKDYGWVTIIAKPLFWLLEKIHGYVGNWGWAIVLLTVLIKAVFFPLSAASYKSMARMKEITPRMQALRERFKSDPQKMNAALMELYKTEKVNPFGGCLPVVIQIPVFISLYWVLLASVEMRGAPWILWIHDLSQRDPFFILPVLMAVSMFVQTSLNPTPPDPVQAKMMKFMPIAFSVMFFFFPAGLVLYYVVNNVLSIAQQYYITRKLGGVKKKPA</sequence>
<feature type="chain" id="PRO_1000070065" description="Membrane protein insertase YidC">
    <location>
        <begin position="1"/>
        <end position="552"/>
    </location>
</feature>
<feature type="transmembrane region" description="Helical" evidence="1">
    <location>
        <begin position="7"/>
        <end position="24"/>
    </location>
</feature>
<feature type="transmembrane region" description="Helical" evidence="1">
    <location>
        <begin position="364"/>
        <end position="384"/>
    </location>
</feature>
<feature type="transmembrane region" description="Helical" evidence="1">
    <location>
        <begin position="434"/>
        <end position="454"/>
    </location>
</feature>
<feature type="transmembrane region" description="Helical" evidence="1">
    <location>
        <begin position="473"/>
        <end position="493"/>
    </location>
</feature>
<feature type="transmembrane region" description="Helical" evidence="1">
    <location>
        <begin position="508"/>
        <end position="528"/>
    </location>
</feature>
<gene>
    <name evidence="1" type="primary">yidC</name>
    <name type="ordered locus">Bcen2424_3163</name>
</gene>
<organism>
    <name type="scientific">Burkholderia cenocepacia (strain HI2424)</name>
    <dbReference type="NCBI Taxonomy" id="331272"/>
    <lineage>
        <taxon>Bacteria</taxon>
        <taxon>Pseudomonadati</taxon>
        <taxon>Pseudomonadota</taxon>
        <taxon>Betaproteobacteria</taxon>
        <taxon>Burkholderiales</taxon>
        <taxon>Burkholderiaceae</taxon>
        <taxon>Burkholderia</taxon>
        <taxon>Burkholderia cepacia complex</taxon>
    </lineage>
</organism>
<keyword id="KW-0997">Cell inner membrane</keyword>
<keyword id="KW-1003">Cell membrane</keyword>
<keyword id="KW-0143">Chaperone</keyword>
<keyword id="KW-0472">Membrane</keyword>
<keyword id="KW-0653">Protein transport</keyword>
<keyword id="KW-0812">Transmembrane</keyword>
<keyword id="KW-1133">Transmembrane helix</keyword>
<keyword id="KW-0813">Transport</keyword>
<protein>
    <recommendedName>
        <fullName evidence="1">Membrane protein insertase YidC</fullName>
    </recommendedName>
    <alternativeName>
        <fullName evidence="1">Foldase YidC</fullName>
    </alternativeName>
    <alternativeName>
        <fullName evidence="1">Membrane integrase YidC</fullName>
    </alternativeName>
    <alternativeName>
        <fullName evidence="1">Membrane protein YidC</fullName>
    </alternativeName>
</protein>
<dbReference type="EMBL" id="CP000458">
    <property type="protein sequence ID" value="ABK09910.1"/>
    <property type="molecule type" value="Genomic_DNA"/>
</dbReference>
<dbReference type="RefSeq" id="WP_011546513.1">
    <property type="nucleotide sequence ID" value="NC_008542.1"/>
</dbReference>
<dbReference type="SMR" id="A0KBN3"/>
<dbReference type="KEGG" id="bch:Bcen2424_3163"/>
<dbReference type="HOGENOM" id="CLU_016535_3_0_4"/>
<dbReference type="GO" id="GO:0005886">
    <property type="term" value="C:plasma membrane"/>
    <property type="evidence" value="ECO:0007669"/>
    <property type="project" value="UniProtKB-SubCell"/>
</dbReference>
<dbReference type="GO" id="GO:0032977">
    <property type="term" value="F:membrane insertase activity"/>
    <property type="evidence" value="ECO:0007669"/>
    <property type="project" value="InterPro"/>
</dbReference>
<dbReference type="GO" id="GO:0051205">
    <property type="term" value="P:protein insertion into membrane"/>
    <property type="evidence" value="ECO:0007669"/>
    <property type="project" value="TreeGrafter"/>
</dbReference>
<dbReference type="GO" id="GO:0015031">
    <property type="term" value="P:protein transport"/>
    <property type="evidence" value="ECO:0007669"/>
    <property type="project" value="UniProtKB-KW"/>
</dbReference>
<dbReference type="CDD" id="cd20070">
    <property type="entry name" value="5TM_YidC_Alb3"/>
    <property type="match status" value="1"/>
</dbReference>
<dbReference type="CDD" id="cd19961">
    <property type="entry name" value="EcYidC-like_peri"/>
    <property type="match status" value="1"/>
</dbReference>
<dbReference type="Gene3D" id="2.70.98.90">
    <property type="match status" value="1"/>
</dbReference>
<dbReference type="HAMAP" id="MF_01810">
    <property type="entry name" value="YidC_type1"/>
    <property type="match status" value="1"/>
</dbReference>
<dbReference type="InterPro" id="IPR019998">
    <property type="entry name" value="Membr_insert_YidC"/>
</dbReference>
<dbReference type="InterPro" id="IPR028053">
    <property type="entry name" value="Membr_insert_YidC_N"/>
</dbReference>
<dbReference type="InterPro" id="IPR001708">
    <property type="entry name" value="YidC/ALB3/OXA1/COX18"/>
</dbReference>
<dbReference type="InterPro" id="IPR028055">
    <property type="entry name" value="YidC/Oxa/ALB_C"/>
</dbReference>
<dbReference type="InterPro" id="IPR047196">
    <property type="entry name" value="YidC_ALB_C"/>
</dbReference>
<dbReference type="InterPro" id="IPR038221">
    <property type="entry name" value="YidC_periplasmic_sf"/>
</dbReference>
<dbReference type="NCBIfam" id="NF002352">
    <property type="entry name" value="PRK01318.1-3"/>
    <property type="match status" value="1"/>
</dbReference>
<dbReference type="NCBIfam" id="NF002353">
    <property type="entry name" value="PRK01318.1-4"/>
    <property type="match status" value="1"/>
</dbReference>
<dbReference type="NCBIfam" id="TIGR03593">
    <property type="entry name" value="yidC_nterm"/>
    <property type="match status" value="1"/>
</dbReference>
<dbReference type="NCBIfam" id="TIGR03592">
    <property type="entry name" value="yidC_oxa1_cterm"/>
    <property type="match status" value="1"/>
</dbReference>
<dbReference type="PANTHER" id="PTHR12428:SF65">
    <property type="entry name" value="CYTOCHROME C OXIDASE ASSEMBLY PROTEIN COX18, MITOCHONDRIAL"/>
    <property type="match status" value="1"/>
</dbReference>
<dbReference type="PANTHER" id="PTHR12428">
    <property type="entry name" value="OXA1"/>
    <property type="match status" value="1"/>
</dbReference>
<dbReference type="Pfam" id="PF02096">
    <property type="entry name" value="60KD_IMP"/>
    <property type="match status" value="1"/>
</dbReference>
<dbReference type="Pfam" id="PF14849">
    <property type="entry name" value="YidC_periplas"/>
    <property type="match status" value="1"/>
</dbReference>
<dbReference type="PRINTS" id="PR00701">
    <property type="entry name" value="60KDINNERMP"/>
</dbReference>
<dbReference type="PRINTS" id="PR01900">
    <property type="entry name" value="YIDCPROTEIN"/>
</dbReference>
<comment type="function">
    <text evidence="1">Required for the insertion and/or proper folding and/or complex formation of integral membrane proteins into the membrane. Involved in integration of membrane proteins that insert both dependently and independently of the Sec translocase complex, as well as at least some lipoproteins. Aids folding of multispanning membrane proteins.</text>
</comment>
<comment type="subunit">
    <text evidence="1">Interacts with the Sec translocase complex via SecD. Specifically interacts with transmembrane segments of nascent integral membrane proteins during membrane integration.</text>
</comment>
<comment type="subcellular location">
    <subcellularLocation>
        <location evidence="1">Cell inner membrane</location>
        <topology evidence="1">Multi-pass membrane protein</topology>
    </subcellularLocation>
</comment>
<comment type="similarity">
    <text evidence="1">Belongs to the OXA1/ALB3/YidC family. Type 1 subfamily.</text>
</comment>
<accession>A0KBN3</accession>
<proteinExistence type="inferred from homology"/>
<reference key="1">
    <citation type="submission" date="2006-08" db="EMBL/GenBank/DDBJ databases">
        <title>Complete sequence of chromosome 1 of Burkholderia cenocepacia HI2424.</title>
        <authorList>
            <person name="Copeland A."/>
            <person name="Lucas S."/>
            <person name="Lapidus A."/>
            <person name="Barry K."/>
            <person name="Detter J.C."/>
            <person name="Glavina del Rio T."/>
            <person name="Hammon N."/>
            <person name="Israni S."/>
            <person name="Pitluck S."/>
            <person name="Chain P."/>
            <person name="Malfatti S."/>
            <person name="Shin M."/>
            <person name="Vergez L."/>
            <person name="Schmutz J."/>
            <person name="Larimer F."/>
            <person name="Land M."/>
            <person name="Hauser L."/>
            <person name="Kyrpides N."/>
            <person name="Kim E."/>
            <person name="LiPuma J.J."/>
            <person name="Gonzalez C.F."/>
            <person name="Konstantinidis K."/>
            <person name="Tiedje J.M."/>
            <person name="Richardson P."/>
        </authorList>
    </citation>
    <scope>NUCLEOTIDE SEQUENCE [LARGE SCALE GENOMIC DNA]</scope>
    <source>
        <strain>HI2424</strain>
    </source>
</reference>